<name>PURA_ECOSE</name>
<reference key="1">
    <citation type="journal article" date="2008" name="DNA Res.">
        <title>Complete genome sequence and comparative analysis of the wild-type commensal Escherichia coli strain SE11 isolated from a healthy adult.</title>
        <authorList>
            <person name="Oshima K."/>
            <person name="Toh H."/>
            <person name="Ogura Y."/>
            <person name="Sasamoto H."/>
            <person name="Morita H."/>
            <person name="Park S.-H."/>
            <person name="Ooka T."/>
            <person name="Iyoda S."/>
            <person name="Taylor T.D."/>
            <person name="Hayashi T."/>
            <person name="Itoh K."/>
            <person name="Hattori M."/>
        </authorList>
    </citation>
    <scope>NUCLEOTIDE SEQUENCE [LARGE SCALE GENOMIC DNA]</scope>
    <source>
        <strain>SE11</strain>
    </source>
</reference>
<organism>
    <name type="scientific">Escherichia coli (strain SE11)</name>
    <dbReference type="NCBI Taxonomy" id="409438"/>
    <lineage>
        <taxon>Bacteria</taxon>
        <taxon>Pseudomonadati</taxon>
        <taxon>Pseudomonadota</taxon>
        <taxon>Gammaproteobacteria</taxon>
        <taxon>Enterobacterales</taxon>
        <taxon>Enterobacteriaceae</taxon>
        <taxon>Escherichia</taxon>
    </lineage>
</organism>
<feature type="chain" id="PRO_1000089291" description="Adenylosuccinate synthetase">
    <location>
        <begin position="1"/>
        <end position="432"/>
    </location>
</feature>
<feature type="active site" description="Proton acceptor" evidence="1">
    <location>
        <position position="14"/>
    </location>
</feature>
<feature type="active site" description="Proton donor" evidence="1">
    <location>
        <position position="42"/>
    </location>
</feature>
<feature type="binding site" evidence="1">
    <location>
        <begin position="13"/>
        <end position="19"/>
    </location>
    <ligand>
        <name>GTP</name>
        <dbReference type="ChEBI" id="CHEBI:37565"/>
    </ligand>
</feature>
<feature type="binding site" description="in other chain" evidence="1">
    <location>
        <begin position="14"/>
        <end position="17"/>
    </location>
    <ligand>
        <name>IMP</name>
        <dbReference type="ChEBI" id="CHEBI:58053"/>
        <note>ligand shared between dimeric partners</note>
    </ligand>
</feature>
<feature type="binding site" evidence="1">
    <location>
        <position position="14"/>
    </location>
    <ligand>
        <name>Mg(2+)</name>
        <dbReference type="ChEBI" id="CHEBI:18420"/>
    </ligand>
</feature>
<feature type="binding site" description="in other chain" evidence="1">
    <location>
        <begin position="39"/>
        <end position="42"/>
    </location>
    <ligand>
        <name>IMP</name>
        <dbReference type="ChEBI" id="CHEBI:58053"/>
        <note>ligand shared between dimeric partners</note>
    </ligand>
</feature>
<feature type="binding site" evidence="1">
    <location>
        <begin position="41"/>
        <end position="43"/>
    </location>
    <ligand>
        <name>GTP</name>
        <dbReference type="ChEBI" id="CHEBI:37565"/>
    </ligand>
</feature>
<feature type="binding site" evidence="1">
    <location>
        <position position="41"/>
    </location>
    <ligand>
        <name>Mg(2+)</name>
        <dbReference type="ChEBI" id="CHEBI:18420"/>
    </ligand>
</feature>
<feature type="binding site" description="in other chain" evidence="1">
    <location>
        <position position="130"/>
    </location>
    <ligand>
        <name>IMP</name>
        <dbReference type="ChEBI" id="CHEBI:58053"/>
        <note>ligand shared between dimeric partners</note>
    </ligand>
</feature>
<feature type="binding site" evidence="1">
    <location>
        <position position="144"/>
    </location>
    <ligand>
        <name>IMP</name>
        <dbReference type="ChEBI" id="CHEBI:58053"/>
        <note>ligand shared between dimeric partners</note>
    </ligand>
</feature>
<feature type="binding site" description="in other chain" evidence="1">
    <location>
        <position position="225"/>
    </location>
    <ligand>
        <name>IMP</name>
        <dbReference type="ChEBI" id="CHEBI:58053"/>
        <note>ligand shared between dimeric partners</note>
    </ligand>
</feature>
<feature type="binding site" description="in other chain" evidence="1">
    <location>
        <position position="240"/>
    </location>
    <ligand>
        <name>IMP</name>
        <dbReference type="ChEBI" id="CHEBI:58053"/>
        <note>ligand shared between dimeric partners</note>
    </ligand>
</feature>
<feature type="binding site" evidence="1">
    <location>
        <begin position="300"/>
        <end position="306"/>
    </location>
    <ligand>
        <name>substrate</name>
    </ligand>
</feature>
<feature type="binding site" description="in other chain" evidence="1">
    <location>
        <position position="304"/>
    </location>
    <ligand>
        <name>IMP</name>
        <dbReference type="ChEBI" id="CHEBI:58053"/>
        <note>ligand shared between dimeric partners</note>
    </ligand>
</feature>
<feature type="binding site" evidence="1">
    <location>
        <position position="306"/>
    </location>
    <ligand>
        <name>GTP</name>
        <dbReference type="ChEBI" id="CHEBI:37565"/>
    </ligand>
</feature>
<feature type="binding site" evidence="1">
    <location>
        <begin position="332"/>
        <end position="334"/>
    </location>
    <ligand>
        <name>GTP</name>
        <dbReference type="ChEBI" id="CHEBI:37565"/>
    </ligand>
</feature>
<feature type="binding site" evidence="1">
    <location>
        <begin position="415"/>
        <end position="417"/>
    </location>
    <ligand>
        <name>GTP</name>
        <dbReference type="ChEBI" id="CHEBI:37565"/>
    </ligand>
</feature>
<evidence type="ECO:0000255" key="1">
    <source>
        <dbReference type="HAMAP-Rule" id="MF_00011"/>
    </source>
</evidence>
<sequence length="432" mass="47345">MGNNVVVLGTQWGDEGKGKIVDLLTERAKYVVRYQGGHNAGHTLVINGEKTVLHLIPSGILRENVTSIIGNGVVLSPAALMKEMKELEDRGIPVRERLLLSEACPLILDYHVALDNAREKARGAKAIGTTGRGIGPAYEDKVARRGLRVGDLFDKETFAEKLKEVMEYHNFQLVNYYKAEAVDYQKVLDDTMAVADILTSMVVDVSDLLDQARQRGDFVMFEGAQGTLLDIDHGTYPYVTSSNTTAGGVATGSGLGPRYVDYVLGILKAYSTRVGAGPFPTELFDETGEFLCKQGNEFGATTGRRRRTGWLDTVAVRRAVQLNSLSGFCLTKLDVLDGLKEVKLCVAYRMPDGREVTTTPLAADDWKGVEPIYETMPGWSESTFGVKDRSGLPQAALNYIKRIEELTGVPIDIISTGPDRTETMILRDPFDA</sequence>
<accession>B6I281</accession>
<dbReference type="EC" id="6.3.4.4" evidence="1"/>
<dbReference type="EMBL" id="AP009240">
    <property type="protein sequence ID" value="BAG79998.1"/>
    <property type="molecule type" value="Genomic_DNA"/>
</dbReference>
<dbReference type="RefSeq" id="WP_000527955.1">
    <property type="nucleotide sequence ID" value="NC_011415.1"/>
</dbReference>
<dbReference type="SMR" id="B6I281"/>
<dbReference type="GeneID" id="75202411"/>
<dbReference type="KEGG" id="ecy:ECSE_4474"/>
<dbReference type="HOGENOM" id="CLU_029848_0_0_6"/>
<dbReference type="UniPathway" id="UPA00075">
    <property type="reaction ID" value="UER00335"/>
</dbReference>
<dbReference type="Proteomes" id="UP000008199">
    <property type="component" value="Chromosome"/>
</dbReference>
<dbReference type="GO" id="GO:0005737">
    <property type="term" value="C:cytoplasm"/>
    <property type="evidence" value="ECO:0007669"/>
    <property type="project" value="UniProtKB-SubCell"/>
</dbReference>
<dbReference type="GO" id="GO:0004019">
    <property type="term" value="F:adenylosuccinate synthase activity"/>
    <property type="evidence" value="ECO:0007669"/>
    <property type="project" value="UniProtKB-UniRule"/>
</dbReference>
<dbReference type="GO" id="GO:0005525">
    <property type="term" value="F:GTP binding"/>
    <property type="evidence" value="ECO:0007669"/>
    <property type="project" value="UniProtKB-UniRule"/>
</dbReference>
<dbReference type="GO" id="GO:0000287">
    <property type="term" value="F:magnesium ion binding"/>
    <property type="evidence" value="ECO:0007669"/>
    <property type="project" value="UniProtKB-UniRule"/>
</dbReference>
<dbReference type="GO" id="GO:0044208">
    <property type="term" value="P:'de novo' AMP biosynthetic process"/>
    <property type="evidence" value="ECO:0007669"/>
    <property type="project" value="UniProtKB-UniRule"/>
</dbReference>
<dbReference type="GO" id="GO:0046040">
    <property type="term" value="P:IMP metabolic process"/>
    <property type="evidence" value="ECO:0007669"/>
    <property type="project" value="TreeGrafter"/>
</dbReference>
<dbReference type="CDD" id="cd03108">
    <property type="entry name" value="AdSS"/>
    <property type="match status" value="1"/>
</dbReference>
<dbReference type="FunFam" id="1.10.300.10:FF:000001">
    <property type="entry name" value="Adenylosuccinate synthetase"/>
    <property type="match status" value="1"/>
</dbReference>
<dbReference type="FunFam" id="3.90.170.10:FF:000001">
    <property type="entry name" value="Adenylosuccinate synthetase"/>
    <property type="match status" value="1"/>
</dbReference>
<dbReference type="Gene3D" id="3.40.440.10">
    <property type="entry name" value="Adenylosuccinate Synthetase, subunit A, domain 1"/>
    <property type="match status" value="1"/>
</dbReference>
<dbReference type="Gene3D" id="1.10.300.10">
    <property type="entry name" value="Adenylosuccinate Synthetase, subunit A, domain 2"/>
    <property type="match status" value="1"/>
</dbReference>
<dbReference type="Gene3D" id="3.90.170.10">
    <property type="entry name" value="Adenylosuccinate Synthetase, subunit A, domain 3"/>
    <property type="match status" value="1"/>
</dbReference>
<dbReference type="HAMAP" id="MF_00011">
    <property type="entry name" value="Adenylosucc_synth"/>
    <property type="match status" value="1"/>
</dbReference>
<dbReference type="InterPro" id="IPR018220">
    <property type="entry name" value="Adenylosuccin_syn_GTP-bd"/>
</dbReference>
<dbReference type="InterPro" id="IPR033128">
    <property type="entry name" value="Adenylosuccin_syn_Lys_AS"/>
</dbReference>
<dbReference type="InterPro" id="IPR042109">
    <property type="entry name" value="Adenylosuccinate_synth_dom1"/>
</dbReference>
<dbReference type="InterPro" id="IPR042110">
    <property type="entry name" value="Adenylosuccinate_synth_dom2"/>
</dbReference>
<dbReference type="InterPro" id="IPR042111">
    <property type="entry name" value="Adenylosuccinate_synth_dom3"/>
</dbReference>
<dbReference type="InterPro" id="IPR001114">
    <property type="entry name" value="Adenylosuccinate_synthetase"/>
</dbReference>
<dbReference type="InterPro" id="IPR027417">
    <property type="entry name" value="P-loop_NTPase"/>
</dbReference>
<dbReference type="NCBIfam" id="NF002223">
    <property type="entry name" value="PRK01117.1"/>
    <property type="match status" value="1"/>
</dbReference>
<dbReference type="NCBIfam" id="TIGR00184">
    <property type="entry name" value="purA"/>
    <property type="match status" value="1"/>
</dbReference>
<dbReference type="PANTHER" id="PTHR11846">
    <property type="entry name" value="ADENYLOSUCCINATE SYNTHETASE"/>
    <property type="match status" value="1"/>
</dbReference>
<dbReference type="PANTHER" id="PTHR11846:SF0">
    <property type="entry name" value="ADENYLOSUCCINATE SYNTHETASE"/>
    <property type="match status" value="1"/>
</dbReference>
<dbReference type="Pfam" id="PF00709">
    <property type="entry name" value="Adenylsucc_synt"/>
    <property type="match status" value="1"/>
</dbReference>
<dbReference type="SMART" id="SM00788">
    <property type="entry name" value="Adenylsucc_synt"/>
    <property type="match status" value="1"/>
</dbReference>
<dbReference type="SUPFAM" id="SSF52540">
    <property type="entry name" value="P-loop containing nucleoside triphosphate hydrolases"/>
    <property type="match status" value="1"/>
</dbReference>
<dbReference type="PROSITE" id="PS01266">
    <property type="entry name" value="ADENYLOSUCCIN_SYN_1"/>
    <property type="match status" value="1"/>
</dbReference>
<dbReference type="PROSITE" id="PS00513">
    <property type="entry name" value="ADENYLOSUCCIN_SYN_2"/>
    <property type="match status" value="1"/>
</dbReference>
<keyword id="KW-0963">Cytoplasm</keyword>
<keyword id="KW-0342">GTP-binding</keyword>
<keyword id="KW-0436">Ligase</keyword>
<keyword id="KW-0460">Magnesium</keyword>
<keyword id="KW-0479">Metal-binding</keyword>
<keyword id="KW-0547">Nucleotide-binding</keyword>
<keyword id="KW-0658">Purine biosynthesis</keyword>
<gene>
    <name evidence="1" type="primary">purA</name>
    <name type="ordered locus">ECSE_4474</name>
</gene>
<protein>
    <recommendedName>
        <fullName evidence="1">Adenylosuccinate synthetase</fullName>
        <shortName evidence="1">AMPSase</shortName>
        <shortName evidence="1">AdSS</shortName>
        <ecNumber evidence="1">6.3.4.4</ecNumber>
    </recommendedName>
    <alternativeName>
        <fullName evidence="1">IMP--aspartate ligase</fullName>
    </alternativeName>
</protein>
<comment type="function">
    <text evidence="1">Plays an important role in the de novo pathway of purine nucleotide biosynthesis. Catalyzes the first committed step in the biosynthesis of AMP from IMP.</text>
</comment>
<comment type="catalytic activity">
    <reaction evidence="1">
        <text>IMP + L-aspartate + GTP = N(6)-(1,2-dicarboxyethyl)-AMP + GDP + phosphate + 2 H(+)</text>
        <dbReference type="Rhea" id="RHEA:15753"/>
        <dbReference type="ChEBI" id="CHEBI:15378"/>
        <dbReference type="ChEBI" id="CHEBI:29991"/>
        <dbReference type="ChEBI" id="CHEBI:37565"/>
        <dbReference type="ChEBI" id="CHEBI:43474"/>
        <dbReference type="ChEBI" id="CHEBI:57567"/>
        <dbReference type="ChEBI" id="CHEBI:58053"/>
        <dbReference type="ChEBI" id="CHEBI:58189"/>
        <dbReference type="EC" id="6.3.4.4"/>
    </reaction>
</comment>
<comment type="cofactor">
    <cofactor evidence="1">
        <name>Mg(2+)</name>
        <dbReference type="ChEBI" id="CHEBI:18420"/>
    </cofactor>
    <text evidence="1">Binds 1 Mg(2+) ion per subunit.</text>
</comment>
<comment type="pathway">
    <text evidence="1">Purine metabolism; AMP biosynthesis via de novo pathway; AMP from IMP: step 1/2.</text>
</comment>
<comment type="subunit">
    <text evidence="1">Homodimer.</text>
</comment>
<comment type="subcellular location">
    <subcellularLocation>
        <location evidence="1">Cytoplasm</location>
    </subcellularLocation>
</comment>
<comment type="similarity">
    <text evidence="1">Belongs to the adenylosuccinate synthetase family.</text>
</comment>
<proteinExistence type="inferred from homology"/>